<name>Y215_GEOUR</name>
<protein>
    <recommendedName>
        <fullName evidence="1">Putative nickel insertion protein</fullName>
    </recommendedName>
</protein>
<reference key="1">
    <citation type="submission" date="2007-05" db="EMBL/GenBank/DDBJ databases">
        <title>Complete sequence of Geobacter uraniireducens Rf4.</title>
        <authorList>
            <consortium name="US DOE Joint Genome Institute"/>
            <person name="Copeland A."/>
            <person name="Lucas S."/>
            <person name="Lapidus A."/>
            <person name="Barry K."/>
            <person name="Detter J.C."/>
            <person name="Glavina del Rio T."/>
            <person name="Hammon N."/>
            <person name="Israni S."/>
            <person name="Dalin E."/>
            <person name="Tice H."/>
            <person name="Pitluck S."/>
            <person name="Chertkov O."/>
            <person name="Brettin T."/>
            <person name="Bruce D."/>
            <person name="Han C."/>
            <person name="Schmutz J."/>
            <person name="Larimer F."/>
            <person name="Land M."/>
            <person name="Hauser L."/>
            <person name="Kyrpides N."/>
            <person name="Mikhailova N."/>
            <person name="Shelobolina E."/>
            <person name="Aklujkar M."/>
            <person name="Lovley D."/>
            <person name="Richardson P."/>
        </authorList>
    </citation>
    <scope>NUCLEOTIDE SEQUENCE [LARGE SCALE GENOMIC DNA]</scope>
    <source>
        <strain>ATCC BAA-1134 / JCM 13001 / Rf4</strain>
    </source>
</reference>
<gene>
    <name type="ordered locus">Gura_0215</name>
</gene>
<feature type="chain" id="PRO_1000084510" description="Putative nickel insertion protein">
    <location>
        <begin position="1"/>
        <end position="390"/>
    </location>
</feature>
<dbReference type="EMBL" id="CP000698">
    <property type="protein sequence ID" value="ABQ24431.1"/>
    <property type="molecule type" value="Genomic_DNA"/>
</dbReference>
<dbReference type="RefSeq" id="WP_011937160.1">
    <property type="nucleotide sequence ID" value="NC_009483.1"/>
</dbReference>
<dbReference type="SMR" id="A5GDB2"/>
<dbReference type="STRING" id="351605.Gura_0215"/>
<dbReference type="KEGG" id="gur:Gura_0215"/>
<dbReference type="HOGENOM" id="CLU_028523_2_1_7"/>
<dbReference type="OrthoDB" id="9765625at2"/>
<dbReference type="Proteomes" id="UP000006695">
    <property type="component" value="Chromosome"/>
</dbReference>
<dbReference type="GO" id="GO:0016829">
    <property type="term" value="F:lyase activity"/>
    <property type="evidence" value="ECO:0007669"/>
    <property type="project" value="UniProtKB-UniRule"/>
</dbReference>
<dbReference type="GO" id="GO:0016151">
    <property type="term" value="F:nickel cation binding"/>
    <property type="evidence" value="ECO:0007669"/>
    <property type="project" value="UniProtKB-UniRule"/>
</dbReference>
<dbReference type="Gene3D" id="3.10.20.300">
    <property type="entry name" value="mk0293 like domain"/>
    <property type="match status" value="1"/>
</dbReference>
<dbReference type="Gene3D" id="3.30.70.1380">
    <property type="entry name" value="Transcriptional regulatory protein pf0864 domain like"/>
    <property type="match status" value="1"/>
</dbReference>
<dbReference type="HAMAP" id="MF_01074">
    <property type="entry name" value="LarC"/>
    <property type="match status" value="1"/>
</dbReference>
<dbReference type="InterPro" id="IPR002822">
    <property type="entry name" value="Ni_insertion"/>
</dbReference>
<dbReference type="NCBIfam" id="TIGR00299">
    <property type="entry name" value="nickel pincer cofactor biosynthesis protein LarC"/>
    <property type="match status" value="1"/>
</dbReference>
<dbReference type="PANTHER" id="PTHR36566">
    <property type="entry name" value="NICKEL INSERTION PROTEIN-RELATED"/>
    <property type="match status" value="1"/>
</dbReference>
<dbReference type="PANTHER" id="PTHR36566:SF1">
    <property type="entry name" value="PYRIDINIUM-3,5-BISTHIOCARBOXYLIC ACID MONONUCLEOTIDE NICKEL INSERTION PROTEIN"/>
    <property type="match status" value="1"/>
</dbReference>
<dbReference type="Pfam" id="PF01969">
    <property type="entry name" value="Ni_insertion"/>
    <property type="match status" value="1"/>
</dbReference>
<proteinExistence type="inferred from homology"/>
<comment type="similarity">
    <text evidence="1">Belongs to the LarC family.</text>
</comment>
<accession>A5GDB2</accession>
<keyword id="KW-0533">Nickel</keyword>
<keyword id="KW-1185">Reference proteome</keyword>
<evidence type="ECO:0000255" key="1">
    <source>
        <dbReference type="HAMAP-Rule" id="MF_01074"/>
    </source>
</evidence>
<sequence>MRIVYFDCFAGIAGDMTVAALIELGVPIDYLREELAKLPLPLSAYSISVEQVQRKGIAATRFHVRAEEHQPHRHYTDIAAMIEQSTLSDRVKEMAQRVFFRLAEAEARVHGVEIGHVHFHEVGGVDSIVDIVGAAICLDYLGIGELHVSPLPLGSGFVETAHGRLPVPAPATAELLRGIPVHGDVGPGERVTPTGAAIVAALADSFGRAPAMRVVAVGCGAGSKDFDDMPNVVRLVMGEKTAILLKDEIYVIETHIDDMNPEILGFLMERLLACGALDVAFSPLQMKKNRPGSKLTILSSFDKLDELARLVLTESTAIGVRYYPVARMILSRAMEERDTSLGRVKVKVVSDEAQLLRIVPEFEECRRLAREKGLPLMEVYRIIERETAGQ</sequence>
<organism>
    <name type="scientific">Geotalea uraniireducens (strain Rf4)</name>
    <name type="common">Geobacter uraniireducens</name>
    <dbReference type="NCBI Taxonomy" id="351605"/>
    <lineage>
        <taxon>Bacteria</taxon>
        <taxon>Pseudomonadati</taxon>
        <taxon>Thermodesulfobacteriota</taxon>
        <taxon>Desulfuromonadia</taxon>
        <taxon>Geobacterales</taxon>
        <taxon>Geobacteraceae</taxon>
        <taxon>Geotalea</taxon>
    </lineage>
</organism>